<gene>
    <name type="primary">MT-CYB</name>
    <name type="synonym">COB</name>
    <name type="synonym">CYTB</name>
    <name type="synonym">MTCYB</name>
</gene>
<name>CYB_CYNME</name>
<reference key="1">
    <citation type="submission" date="1999-06" db="EMBL/GenBank/DDBJ databases">
        <title>A molecular phylogeny of ground squirrels and prairie dogs.</title>
        <authorList>
            <person name="Harrison R.G."/>
            <person name="Sherman P.W."/>
            <person name="Yensen E."/>
            <person name="Hoffmann R.S."/>
            <person name="Bogdanowicz S.M."/>
        </authorList>
    </citation>
    <scope>NUCLEOTIDE SEQUENCE [GENOMIC DNA]</scope>
    <source>
        <strain>Isolate S107</strain>
    </source>
</reference>
<proteinExistence type="inferred from homology"/>
<keyword id="KW-0249">Electron transport</keyword>
<keyword id="KW-0349">Heme</keyword>
<keyword id="KW-0408">Iron</keyword>
<keyword id="KW-0472">Membrane</keyword>
<keyword id="KW-0479">Metal-binding</keyword>
<keyword id="KW-0496">Mitochondrion</keyword>
<keyword id="KW-0999">Mitochondrion inner membrane</keyword>
<keyword id="KW-0679">Respiratory chain</keyword>
<keyword id="KW-0812">Transmembrane</keyword>
<keyword id="KW-1133">Transmembrane helix</keyword>
<keyword id="KW-0813">Transport</keyword>
<keyword id="KW-0830">Ubiquinone</keyword>
<dbReference type="EMBL" id="AF157847">
    <property type="protein sequence ID" value="AAD50131.1"/>
    <property type="molecule type" value="Genomic_DNA"/>
</dbReference>
<dbReference type="SMR" id="Q9TF91"/>
<dbReference type="GO" id="GO:0005743">
    <property type="term" value="C:mitochondrial inner membrane"/>
    <property type="evidence" value="ECO:0007669"/>
    <property type="project" value="UniProtKB-SubCell"/>
</dbReference>
<dbReference type="GO" id="GO:0045275">
    <property type="term" value="C:respiratory chain complex III"/>
    <property type="evidence" value="ECO:0007669"/>
    <property type="project" value="InterPro"/>
</dbReference>
<dbReference type="GO" id="GO:0046872">
    <property type="term" value="F:metal ion binding"/>
    <property type="evidence" value="ECO:0007669"/>
    <property type="project" value="UniProtKB-KW"/>
</dbReference>
<dbReference type="GO" id="GO:0008121">
    <property type="term" value="F:ubiquinol-cytochrome-c reductase activity"/>
    <property type="evidence" value="ECO:0007669"/>
    <property type="project" value="InterPro"/>
</dbReference>
<dbReference type="GO" id="GO:0006122">
    <property type="term" value="P:mitochondrial electron transport, ubiquinol to cytochrome c"/>
    <property type="evidence" value="ECO:0007669"/>
    <property type="project" value="TreeGrafter"/>
</dbReference>
<dbReference type="CDD" id="cd00290">
    <property type="entry name" value="cytochrome_b_C"/>
    <property type="match status" value="1"/>
</dbReference>
<dbReference type="CDD" id="cd00284">
    <property type="entry name" value="Cytochrome_b_N"/>
    <property type="match status" value="1"/>
</dbReference>
<dbReference type="FunFam" id="1.20.810.10:FF:000002">
    <property type="entry name" value="Cytochrome b"/>
    <property type="match status" value="1"/>
</dbReference>
<dbReference type="Gene3D" id="1.20.810.10">
    <property type="entry name" value="Cytochrome Bc1 Complex, Chain C"/>
    <property type="match status" value="1"/>
</dbReference>
<dbReference type="InterPro" id="IPR005798">
    <property type="entry name" value="Cyt_b/b6_C"/>
</dbReference>
<dbReference type="InterPro" id="IPR036150">
    <property type="entry name" value="Cyt_b/b6_C_sf"/>
</dbReference>
<dbReference type="InterPro" id="IPR005797">
    <property type="entry name" value="Cyt_b/b6_N"/>
</dbReference>
<dbReference type="InterPro" id="IPR027387">
    <property type="entry name" value="Cytb/b6-like_sf"/>
</dbReference>
<dbReference type="InterPro" id="IPR030689">
    <property type="entry name" value="Cytochrome_b"/>
</dbReference>
<dbReference type="InterPro" id="IPR048260">
    <property type="entry name" value="Cytochrome_b_C_euk/bac"/>
</dbReference>
<dbReference type="InterPro" id="IPR048259">
    <property type="entry name" value="Cytochrome_b_N_euk/bac"/>
</dbReference>
<dbReference type="InterPro" id="IPR016174">
    <property type="entry name" value="Di-haem_cyt_TM"/>
</dbReference>
<dbReference type="PANTHER" id="PTHR19271">
    <property type="entry name" value="CYTOCHROME B"/>
    <property type="match status" value="1"/>
</dbReference>
<dbReference type="PANTHER" id="PTHR19271:SF16">
    <property type="entry name" value="CYTOCHROME B"/>
    <property type="match status" value="1"/>
</dbReference>
<dbReference type="Pfam" id="PF00032">
    <property type="entry name" value="Cytochrom_B_C"/>
    <property type="match status" value="1"/>
</dbReference>
<dbReference type="Pfam" id="PF00033">
    <property type="entry name" value="Cytochrome_B"/>
    <property type="match status" value="1"/>
</dbReference>
<dbReference type="PIRSF" id="PIRSF038885">
    <property type="entry name" value="COB"/>
    <property type="match status" value="1"/>
</dbReference>
<dbReference type="SUPFAM" id="SSF81648">
    <property type="entry name" value="a domain/subunit of cytochrome bc1 complex (Ubiquinol-cytochrome c reductase)"/>
    <property type="match status" value="1"/>
</dbReference>
<dbReference type="SUPFAM" id="SSF81342">
    <property type="entry name" value="Transmembrane di-heme cytochromes"/>
    <property type="match status" value="1"/>
</dbReference>
<dbReference type="PROSITE" id="PS51003">
    <property type="entry name" value="CYTB_CTER"/>
    <property type="match status" value="1"/>
</dbReference>
<dbReference type="PROSITE" id="PS51002">
    <property type="entry name" value="CYTB_NTER"/>
    <property type="match status" value="1"/>
</dbReference>
<feature type="chain" id="PRO_0000060850" description="Cytochrome b">
    <location>
        <begin position="1"/>
        <end position="379"/>
    </location>
</feature>
<feature type="transmembrane region" description="Helical" evidence="2">
    <location>
        <begin position="33"/>
        <end position="53"/>
    </location>
</feature>
<feature type="transmembrane region" description="Helical" evidence="2">
    <location>
        <begin position="77"/>
        <end position="98"/>
    </location>
</feature>
<feature type="transmembrane region" description="Helical" evidence="2">
    <location>
        <begin position="113"/>
        <end position="133"/>
    </location>
</feature>
<feature type="transmembrane region" description="Helical" evidence="2">
    <location>
        <begin position="178"/>
        <end position="198"/>
    </location>
</feature>
<feature type="transmembrane region" description="Helical" evidence="2">
    <location>
        <begin position="226"/>
        <end position="246"/>
    </location>
</feature>
<feature type="transmembrane region" description="Helical" evidence="2">
    <location>
        <begin position="288"/>
        <end position="308"/>
    </location>
</feature>
<feature type="transmembrane region" description="Helical" evidence="2">
    <location>
        <begin position="320"/>
        <end position="340"/>
    </location>
</feature>
<feature type="transmembrane region" description="Helical" evidence="2">
    <location>
        <begin position="347"/>
        <end position="367"/>
    </location>
</feature>
<feature type="binding site" description="axial binding residue" evidence="2">
    <location>
        <position position="83"/>
    </location>
    <ligand>
        <name>heme b</name>
        <dbReference type="ChEBI" id="CHEBI:60344"/>
        <label>b562</label>
    </ligand>
    <ligandPart>
        <name>Fe</name>
        <dbReference type="ChEBI" id="CHEBI:18248"/>
    </ligandPart>
</feature>
<feature type="binding site" description="axial binding residue" evidence="2">
    <location>
        <position position="97"/>
    </location>
    <ligand>
        <name>heme b</name>
        <dbReference type="ChEBI" id="CHEBI:60344"/>
        <label>b566</label>
    </ligand>
    <ligandPart>
        <name>Fe</name>
        <dbReference type="ChEBI" id="CHEBI:18248"/>
    </ligandPart>
</feature>
<feature type="binding site" description="axial binding residue" evidence="2">
    <location>
        <position position="182"/>
    </location>
    <ligand>
        <name>heme b</name>
        <dbReference type="ChEBI" id="CHEBI:60344"/>
        <label>b562</label>
    </ligand>
    <ligandPart>
        <name>Fe</name>
        <dbReference type="ChEBI" id="CHEBI:18248"/>
    </ligandPart>
</feature>
<feature type="binding site" description="axial binding residue" evidence="2">
    <location>
        <position position="196"/>
    </location>
    <ligand>
        <name>heme b</name>
        <dbReference type="ChEBI" id="CHEBI:60344"/>
        <label>b566</label>
    </ligand>
    <ligandPart>
        <name>Fe</name>
        <dbReference type="ChEBI" id="CHEBI:18248"/>
    </ligandPart>
</feature>
<feature type="binding site" evidence="2">
    <location>
        <position position="201"/>
    </location>
    <ligand>
        <name>a ubiquinone</name>
        <dbReference type="ChEBI" id="CHEBI:16389"/>
    </ligand>
</feature>
<evidence type="ECO:0000250" key="1"/>
<evidence type="ECO:0000250" key="2">
    <source>
        <dbReference type="UniProtKB" id="P00157"/>
    </source>
</evidence>
<evidence type="ECO:0000255" key="3">
    <source>
        <dbReference type="PROSITE-ProRule" id="PRU00967"/>
    </source>
</evidence>
<evidence type="ECO:0000255" key="4">
    <source>
        <dbReference type="PROSITE-ProRule" id="PRU00968"/>
    </source>
</evidence>
<comment type="function">
    <text evidence="2">Component of the ubiquinol-cytochrome c reductase complex (complex III or cytochrome b-c1 complex) that is part of the mitochondrial respiratory chain. The b-c1 complex mediates electron transfer from ubiquinol to cytochrome c. Contributes to the generation of a proton gradient across the mitochondrial membrane that is then used for ATP synthesis.</text>
</comment>
<comment type="cofactor">
    <cofactor evidence="2">
        <name>heme b</name>
        <dbReference type="ChEBI" id="CHEBI:60344"/>
    </cofactor>
    <text evidence="2">Binds 2 heme b groups non-covalently.</text>
</comment>
<comment type="subunit">
    <text evidence="2">The cytochrome bc1 complex contains 11 subunits: 3 respiratory subunits (MT-CYB, CYC1 and UQCRFS1), 2 core proteins (UQCRC1 and UQCRC2) and 6 low-molecular weight proteins (UQCRH/QCR6, UQCRB/QCR7, UQCRQ/QCR8, UQCR10/QCR9, UQCR11/QCR10 and a cleavage product of UQCRFS1). This cytochrome bc1 complex then forms a dimer.</text>
</comment>
<comment type="subcellular location">
    <subcellularLocation>
        <location evidence="2">Mitochondrion inner membrane</location>
        <topology evidence="2">Multi-pass membrane protein</topology>
    </subcellularLocation>
</comment>
<comment type="miscellaneous">
    <text evidence="1">Heme 1 (or BL or b562) is low-potential and absorbs at about 562 nm, and heme 2 (or BH or b566) is high-potential and absorbs at about 566 nm.</text>
</comment>
<comment type="similarity">
    <text evidence="3 4">Belongs to the cytochrome b family.</text>
</comment>
<comment type="caution">
    <text evidence="2">The full-length protein contains only eight transmembrane helices, not nine as predicted by bioinformatics tools.</text>
</comment>
<geneLocation type="mitochondrion"/>
<protein>
    <recommendedName>
        <fullName>Cytochrome b</fullName>
    </recommendedName>
    <alternativeName>
        <fullName>Complex III subunit 3</fullName>
    </alternativeName>
    <alternativeName>
        <fullName>Complex III subunit III</fullName>
    </alternativeName>
    <alternativeName>
        <fullName>Cytochrome b-c1 complex subunit 3</fullName>
    </alternativeName>
    <alternativeName>
        <fullName>Ubiquinol-cytochrome-c reductase complex cytochrome b subunit</fullName>
    </alternativeName>
</protein>
<organism>
    <name type="scientific">Cynomys mexicanus</name>
    <name type="common">Mexican prairie dog</name>
    <dbReference type="NCBI Taxonomy" id="99826"/>
    <lineage>
        <taxon>Eukaryota</taxon>
        <taxon>Metazoa</taxon>
        <taxon>Chordata</taxon>
        <taxon>Craniata</taxon>
        <taxon>Vertebrata</taxon>
        <taxon>Euteleostomi</taxon>
        <taxon>Mammalia</taxon>
        <taxon>Eutheria</taxon>
        <taxon>Euarchontoglires</taxon>
        <taxon>Glires</taxon>
        <taxon>Rodentia</taxon>
        <taxon>Sciuromorpha</taxon>
        <taxon>Sciuridae</taxon>
        <taxon>Xerinae</taxon>
        <taxon>Marmotini</taxon>
        <taxon>Cynomys</taxon>
    </lineage>
</organism>
<sequence length="379" mass="42937">MTNTRKTHPLIKIINHSFIDLPTPSNISAWWNFGSLLGLCLAIQILTGLFLAMHYTSDTMTAFSSVTHICRDVNYGWLIRYMHANGASMFFICLFLHVGRGLYYGSYTYFETWNIGVVLLFVVMATAFMGYVLPWGQMSFWGATVITNLLSAIPYIGTTLVEWIWGGFSVDKATLTRFFAFHFVLPFIVAALVMVHLLFLHETGSNNPSGLISDSDKIPFHPYYTIKDILGVLLLIMALMILVLFSPDLLGDPDNYTPANPLNTPPHIKPEWYFLFAYAILRSIPNKLGGVLALVFSILILTLFPLLHVSKQRSMMFRPLSQCMFWFLVADLLTLTWIGGQPVEHPFIIIGQLASMLYFTIILLMLPTVSLIENKLLKW</sequence>
<accession>Q9TF91</accession>